<protein>
    <recommendedName>
        <fullName evidence="1">Large ribosomal subunit protein bL12</fullName>
    </recommendedName>
    <alternativeName>
        <fullName evidence="2">50S ribosomal protein L7/L12</fullName>
    </alternativeName>
</protein>
<dbReference type="EMBL" id="AM260479">
    <property type="protein sequence ID" value="CAJ94566.1"/>
    <property type="molecule type" value="Genomic_DNA"/>
</dbReference>
<dbReference type="RefSeq" id="WP_010810464.1">
    <property type="nucleotide sequence ID" value="NZ_CP039287.1"/>
</dbReference>
<dbReference type="SMR" id="Q0K605"/>
<dbReference type="STRING" id="381666.H16_A3498"/>
<dbReference type="GeneID" id="34308472"/>
<dbReference type="KEGG" id="reh:H16_A3498"/>
<dbReference type="eggNOG" id="COG0222">
    <property type="taxonomic scope" value="Bacteria"/>
</dbReference>
<dbReference type="HOGENOM" id="CLU_086499_3_2_4"/>
<dbReference type="OrthoDB" id="9811748at2"/>
<dbReference type="Proteomes" id="UP000008210">
    <property type="component" value="Chromosome 1"/>
</dbReference>
<dbReference type="GO" id="GO:0022625">
    <property type="term" value="C:cytosolic large ribosomal subunit"/>
    <property type="evidence" value="ECO:0007669"/>
    <property type="project" value="TreeGrafter"/>
</dbReference>
<dbReference type="GO" id="GO:0003729">
    <property type="term" value="F:mRNA binding"/>
    <property type="evidence" value="ECO:0007669"/>
    <property type="project" value="TreeGrafter"/>
</dbReference>
<dbReference type="GO" id="GO:0003735">
    <property type="term" value="F:structural constituent of ribosome"/>
    <property type="evidence" value="ECO:0007669"/>
    <property type="project" value="InterPro"/>
</dbReference>
<dbReference type="GO" id="GO:0006412">
    <property type="term" value="P:translation"/>
    <property type="evidence" value="ECO:0007669"/>
    <property type="project" value="UniProtKB-UniRule"/>
</dbReference>
<dbReference type="CDD" id="cd00387">
    <property type="entry name" value="Ribosomal_L7_L12"/>
    <property type="match status" value="1"/>
</dbReference>
<dbReference type="FunFam" id="3.30.1390.10:FF:000001">
    <property type="entry name" value="50S ribosomal protein L7/L12"/>
    <property type="match status" value="1"/>
</dbReference>
<dbReference type="Gene3D" id="3.30.1390.10">
    <property type="match status" value="1"/>
</dbReference>
<dbReference type="Gene3D" id="1.20.5.710">
    <property type="entry name" value="Single helix bin"/>
    <property type="match status" value="1"/>
</dbReference>
<dbReference type="HAMAP" id="MF_00368">
    <property type="entry name" value="Ribosomal_bL12"/>
    <property type="match status" value="1"/>
</dbReference>
<dbReference type="InterPro" id="IPR000206">
    <property type="entry name" value="Ribosomal_bL12"/>
</dbReference>
<dbReference type="InterPro" id="IPR013823">
    <property type="entry name" value="Ribosomal_bL12_C"/>
</dbReference>
<dbReference type="InterPro" id="IPR014719">
    <property type="entry name" value="Ribosomal_bL12_C/ClpS-like"/>
</dbReference>
<dbReference type="InterPro" id="IPR008932">
    <property type="entry name" value="Ribosomal_bL12_oligo"/>
</dbReference>
<dbReference type="InterPro" id="IPR036235">
    <property type="entry name" value="Ribosomal_bL12_oligo_N_sf"/>
</dbReference>
<dbReference type="NCBIfam" id="TIGR00855">
    <property type="entry name" value="L12"/>
    <property type="match status" value="1"/>
</dbReference>
<dbReference type="PANTHER" id="PTHR45987">
    <property type="entry name" value="39S RIBOSOMAL PROTEIN L12"/>
    <property type="match status" value="1"/>
</dbReference>
<dbReference type="PANTHER" id="PTHR45987:SF4">
    <property type="entry name" value="LARGE RIBOSOMAL SUBUNIT PROTEIN BL12M"/>
    <property type="match status" value="1"/>
</dbReference>
<dbReference type="Pfam" id="PF00542">
    <property type="entry name" value="Ribosomal_L12"/>
    <property type="match status" value="1"/>
</dbReference>
<dbReference type="Pfam" id="PF16320">
    <property type="entry name" value="Ribosomal_L12_N"/>
    <property type="match status" value="1"/>
</dbReference>
<dbReference type="SUPFAM" id="SSF54736">
    <property type="entry name" value="ClpS-like"/>
    <property type="match status" value="1"/>
</dbReference>
<dbReference type="SUPFAM" id="SSF48300">
    <property type="entry name" value="Ribosomal protein L7/12, oligomerisation (N-terminal) domain"/>
    <property type="match status" value="1"/>
</dbReference>
<sequence length="124" mass="12534">MAITKDDILEAVGAMSVMELNDLVKAFEEKFGVSAAAMAVAAAPGAGGAAAAEEQTEFNVILAEVGANKVGVIKAVREITGLGLKEAKDLVDGAPKPVKEGVDKAAAAEAKKKLEDAGAKVDVK</sequence>
<evidence type="ECO:0000255" key="1">
    <source>
        <dbReference type="HAMAP-Rule" id="MF_00368"/>
    </source>
</evidence>
<evidence type="ECO:0000305" key="2"/>
<keyword id="KW-1185">Reference proteome</keyword>
<keyword id="KW-0687">Ribonucleoprotein</keyword>
<keyword id="KW-0689">Ribosomal protein</keyword>
<proteinExistence type="inferred from homology"/>
<organism>
    <name type="scientific">Cupriavidus necator (strain ATCC 17699 / DSM 428 / KCTC 22496 / NCIMB 10442 / H16 / Stanier 337)</name>
    <name type="common">Ralstonia eutropha</name>
    <dbReference type="NCBI Taxonomy" id="381666"/>
    <lineage>
        <taxon>Bacteria</taxon>
        <taxon>Pseudomonadati</taxon>
        <taxon>Pseudomonadota</taxon>
        <taxon>Betaproteobacteria</taxon>
        <taxon>Burkholderiales</taxon>
        <taxon>Burkholderiaceae</taxon>
        <taxon>Cupriavidus</taxon>
    </lineage>
</organism>
<accession>Q0K605</accession>
<reference key="1">
    <citation type="journal article" date="2006" name="Nat. Biotechnol.">
        <title>Genome sequence of the bioplastic-producing 'Knallgas' bacterium Ralstonia eutropha H16.</title>
        <authorList>
            <person name="Pohlmann A."/>
            <person name="Fricke W.F."/>
            <person name="Reinecke F."/>
            <person name="Kusian B."/>
            <person name="Liesegang H."/>
            <person name="Cramm R."/>
            <person name="Eitinger T."/>
            <person name="Ewering C."/>
            <person name="Poetter M."/>
            <person name="Schwartz E."/>
            <person name="Strittmatter A."/>
            <person name="Voss I."/>
            <person name="Gottschalk G."/>
            <person name="Steinbuechel A."/>
            <person name="Friedrich B."/>
            <person name="Bowien B."/>
        </authorList>
    </citation>
    <scope>NUCLEOTIDE SEQUENCE [LARGE SCALE GENOMIC DNA]</scope>
    <source>
        <strain>ATCC 17699 / DSM 428 / KCTC 22496 / NCIMB 10442 / H16 / Stanier 337</strain>
    </source>
</reference>
<gene>
    <name evidence="1" type="primary">rplL</name>
    <name type="ordered locus">H16_A3498</name>
</gene>
<feature type="chain" id="PRO_1000007068" description="Large ribosomal subunit protein bL12">
    <location>
        <begin position="1"/>
        <end position="124"/>
    </location>
</feature>
<comment type="function">
    <text evidence="1">Forms part of the ribosomal stalk which helps the ribosome interact with GTP-bound translation factors. Is thus essential for accurate translation.</text>
</comment>
<comment type="subunit">
    <text evidence="1">Homodimer. Part of the ribosomal stalk of the 50S ribosomal subunit. Forms a multimeric L10(L12)X complex, where L10 forms an elongated spine to which 2 to 4 L12 dimers bind in a sequential fashion. Binds GTP-bound translation factors.</text>
</comment>
<comment type="similarity">
    <text evidence="1">Belongs to the bacterial ribosomal protein bL12 family.</text>
</comment>
<name>RL7_CUPNH</name>